<gene>
    <name type="primary">PCGF1</name>
    <name type="synonym">NSPC1</name>
    <name type="synonym">RNF68</name>
</gene>
<comment type="function">
    <text evidence="3 4 5 8 9">Component of the Polycomb group (PcG) multiprotein BCOR complex, a complex required to maintain the transcriptionally repressive state of some genes, such as BCL6 and the cyclin-dependent kinase inhibitor, CDKN1A. Transcriptional repressor that may be targeted to the DNA by BCL6; this transcription repressor activity may be related to PKC signaling pathway. Represses CDKN1A expression by binding to its promoter, and this repression is dependent on the retinoic acid response element (RARE element). Promotes cell cycle progression and enhances cell proliferation as well. May have a positive role in tumor cell growth by down-regulating CDKN1A. Component of a Polycomb group (PcG) multiprotein PRC1-like complex, a complex class required to maintain the transcriptionally repressive state of many genes, including Hox genes, throughout development. PcG PRC1 complex acts via chromatin remodeling and modification of histones; it mediates monoubiquitination of histone H2A 'Lys-119', rendering chromatin heritably changed in its expressibility (PubMed:26151332). Within the PRC1-like complex, regulates RNF2 ubiquitin ligase activity (PubMed:26151332). Regulates the expression of DPPA4 and NANOG in the NT2 embryonic carcinoma cells (PubMed:26687479).</text>
</comment>
<comment type="subunit">
    <text evidence="4 6 7 8 9 10">Interacts with BCORL1, forming heterodimers (PubMed:23523425, PubMed:27568929). The PCGF1-BCORL1 heterodimeric complex interacts with the KDM2B-SKP1 heterodimeric complex to form a homotetrameric polycomb repression complex 1 (PRC1.1) (PubMed:27568929). Component of the repressive BCOR complex containing a Polycomb group subcomplex at least composed of RYBP, RING1 and RNF2/RING2 (PubMed:16943429). Specifically interacts with BCOR, RING1 and RNF2/RING2 (PubMed:16943429, PubMed:23523425, PubMed:26687479). Component of a PRC1-like complex (PubMed:21282530, PubMed:26151332). Interacts with CBX6, CBX7 and CBX8 (PubMed:21282530). Interacts with DPPA4, NANOG, POU5F1 and RYBP (PubMed:26687479).</text>
</comment>
<comment type="interaction">
    <interactant intactId="EBI-749901">
        <id>Q9BSM1</id>
    </interactant>
    <interactant intactId="EBI-950027">
        <id>Q6W2J9</id>
        <label>BCOR</label>
    </interactant>
    <organismsDiffer>false</organismsDiffer>
    <experiments>14</experiments>
</comment>
<comment type="interaction">
    <interactant intactId="EBI-749901">
        <id>Q9BSM1</id>
    </interactant>
    <interactant intactId="EBI-3951758">
        <id>O95503</id>
        <label>CBX6</label>
    </interactant>
    <organismsDiffer>false</organismsDiffer>
    <experiments>2</experiments>
</comment>
<comment type="interaction">
    <interactant intactId="EBI-749901">
        <id>Q9BSM1</id>
    </interactant>
    <interactant intactId="EBI-3923843">
        <id>O95931</id>
        <label>CBX7</label>
    </interactant>
    <organismsDiffer>false</organismsDiffer>
    <experiments>3</experiments>
</comment>
<comment type="interaction">
    <interactant intactId="EBI-749901">
        <id>Q9BSM1</id>
    </interactant>
    <interactant intactId="EBI-712912">
        <id>Q9HC52</id>
        <label>CBX8</label>
    </interactant>
    <organismsDiffer>false</organismsDiffer>
    <experiments>8</experiments>
</comment>
<comment type="interaction">
    <interactant intactId="EBI-749901">
        <id>Q9BSM1</id>
    </interactant>
    <interactant intactId="EBI-11977403">
        <id>A0A0C3SFZ9</id>
        <label>FCHO1</label>
    </interactant>
    <organismsDiffer>false</organismsDiffer>
    <experiments>3</experiments>
</comment>
<comment type="interaction">
    <interactant intactId="EBI-749901">
        <id>Q9BSM1</id>
    </interactant>
    <interactant intactId="EBI-752313">
        <id>Q06587</id>
        <label>RING1</label>
    </interactant>
    <organismsDiffer>false</organismsDiffer>
    <experiments>11</experiments>
</comment>
<comment type="interaction">
    <interactant intactId="EBI-749901">
        <id>Q9BSM1</id>
    </interactant>
    <interactant intactId="EBI-722416">
        <id>Q99496</id>
        <label>RNF2</label>
    </interactant>
    <organismsDiffer>false</organismsDiffer>
    <experiments>17</experiments>
</comment>
<comment type="interaction">
    <interactant intactId="EBI-16041863">
        <id>Q9BSM1-1</id>
    </interactant>
    <interactant intactId="EBI-16028932">
        <id>Q6W2J9-1</id>
        <label>BCOR</label>
    </interactant>
    <organismsDiffer>false</organismsDiffer>
    <experiments>7</experiments>
</comment>
<comment type="interaction">
    <interactant intactId="EBI-16041863">
        <id>Q9BSM1-1</id>
    </interactant>
    <interactant intactId="EBI-16041827">
        <id>Q5H9F3-1</id>
        <label>BCORL1</label>
    </interactant>
    <organismsDiffer>false</organismsDiffer>
    <experiments>6</experiments>
</comment>
<comment type="subcellular location">
    <subcellularLocation>
        <location evidence="3 6">Nucleus</location>
    </subcellularLocation>
</comment>
<comment type="alternative products">
    <event type="alternative splicing"/>
    <isoform>
        <id>Q9BSM1-1</id>
        <name>1</name>
        <sequence type="displayed"/>
    </isoform>
    <isoform>
        <id>Q9BSM1-3</id>
        <name>2</name>
        <sequence type="described" ref="VSP_036393"/>
    </isoform>
</comment>
<comment type="tissue specificity">
    <text evidence="2">Ubiquitous.</text>
</comment>
<comment type="sequence caution" evidence="12">
    <conflict type="erroneous initiation">
        <sequence resource="EMBL-CDS" id="AAH04952"/>
    </conflict>
    <text>Truncated N-terminus.</text>
</comment>
<comment type="sequence caution" evidence="12">
    <conflict type="erroneous initiation">
        <sequence resource="EMBL-CDS" id="AAP97183"/>
    </conflict>
    <text>Extended N-terminus.</text>
</comment>
<dbReference type="EMBL" id="AF087884">
    <property type="protein sequence ID" value="AAP97183.1"/>
    <property type="status" value="ALT_INIT"/>
    <property type="molecule type" value="mRNA"/>
</dbReference>
<dbReference type="EMBL" id="AC005041">
    <property type="status" value="NOT_ANNOTATED_CDS"/>
    <property type="molecule type" value="Genomic_DNA"/>
</dbReference>
<dbReference type="EMBL" id="BC004952">
    <property type="protein sequence ID" value="AAH04952.1"/>
    <property type="status" value="ALT_INIT"/>
    <property type="molecule type" value="mRNA"/>
</dbReference>
<dbReference type="CCDS" id="CCDS1946.2">
    <molecule id="Q9BSM1-1"/>
</dbReference>
<dbReference type="RefSeq" id="NP_116062.2">
    <molecule id="Q9BSM1-1"/>
    <property type="nucleotide sequence ID" value="NM_032673.3"/>
</dbReference>
<dbReference type="RefSeq" id="XP_054200202.1">
    <molecule id="Q9BSM1-1"/>
    <property type="nucleotide sequence ID" value="XM_054344227.1"/>
</dbReference>
<dbReference type="PDB" id="4HPL">
    <property type="method" value="X-ray"/>
    <property type="resolution" value="2.00 A"/>
    <property type="chains" value="B=167-255"/>
</dbReference>
<dbReference type="PDB" id="4HPM">
    <property type="method" value="X-ray"/>
    <property type="resolution" value="1.85 A"/>
    <property type="chains" value="B/D=167-255"/>
</dbReference>
<dbReference type="PDB" id="5JH5">
    <property type="method" value="X-ray"/>
    <property type="resolution" value="2.55 A"/>
    <property type="chains" value="C=150-255"/>
</dbReference>
<dbReference type="PDB" id="8HCU">
    <property type="method" value="X-ray"/>
    <property type="resolution" value="2.20 A"/>
    <property type="chains" value="B=151-255"/>
</dbReference>
<dbReference type="PDBsum" id="4HPL"/>
<dbReference type="PDBsum" id="4HPM"/>
<dbReference type="PDBsum" id="5JH5"/>
<dbReference type="PDBsum" id="8HCU"/>
<dbReference type="SASBDB" id="Q9BSM1"/>
<dbReference type="SMR" id="Q9BSM1"/>
<dbReference type="BioGRID" id="124243">
    <property type="interactions" value="213"/>
</dbReference>
<dbReference type="ComplexPortal" id="CPX-2272">
    <property type="entry name" value="Non-canonical polycomb repressive complex 1.1, RING2-PCGF1-YAF2 variant"/>
</dbReference>
<dbReference type="ComplexPortal" id="CPX-2354">
    <property type="entry name" value="Non-canonical polycomb repressive complex 1.1, RING1-PCGF1-RYBP variant"/>
</dbReference>
<dbReference type="ComplexPortal" id="CPX-2627">
    <property type="entry name" value="Non-canonical polycomb repressive complex 1.1, RING2-PCGF1-RYBP variant"/>
</dbReference>
<dbReference type="ComplexPortal" id="CPX-7561">
    <property type="entry name" value="Non-canonical polycomb repressive complex 1.1, RING1-PCGF1-YAF2 variant"/>
</dbReference>
<dbReference type="CORUM" id="Q9BSM1"/>
<dbReference type="DIP" id="DIP-52708N"/>
<dbReference type="FunCoup" id="Q9BSM1">
    <property type="interactions" value="1957"/>
</dbReference>
<dbReference type="IntAct" id="Q9BSM1">
    <property type="interactions" value="96"/>
</dbReference>
<dbReference type="MINT" id="Q9BSM1"/>
<dbReference type="STRING" id="9606.ENSP00000233630"/>
<dbReference type="iPTMnet" id="Q9BSM1"/>
<dbReference type="PhosphoSitePlus" id="Q9BSM1"/>
<dbReference type="BioMuta" id="PCGF1"/>
<dbReference type="DMDM" id="223590124"/>
<dbReference type="jPOST" id="Q9BSM1"/>
<dbReference type="MassIVE" id="Q9BSM1"/>
<dbReference type="PaxDb" id="9606-ENSP00000233630"/>
<dbReference type="PeptideAtlas" id="Q9BSM1"/>
<dbReference type="ProteomicsDB" id="78914">
    <molecule id="Q9BSM1-1"/>
</dbReference>
<dbReference type="ProteomicsDB" id="78915">
    <molecule id="Q9BSM1-3"/>
</dbReference>
<dbReference type="Pumba" id="Q9BSM1"/>
<dbReference type="Antibodypedia" id="1867">
    <property type="antibodies" value="151 antibodies from 25 providers"/>
</dbReference>
<dbReference type="DNASU" id="84759"/>
<dbReference type="Ensembl" id="ENST00000233630.11">
    <molecule id="Q9BSM1-1"/>
    <property type="protein sequence ID" value="ENSP00000233630.6"/>
    <property type="gene ID" value="ENSG00000115289.14"/>
</dbReference>
<dbReference type="GeneID" id="84759"/>
<dbReference type="KEGG" id="hsa:84759"/>
<dbReference type="MANE-Select" id="ENST00000233630.11">
    <property type="protein sequence ID" value="ENSP00000233630.6"/>
    <property type="RefSeq nucleotide sequence ID" value="NM_032673.3"/>
    <property type="RefSeq protein sequence ID" value="NP_116062.2"/>
</dbReference>
<dbReference type="UCSC" id="uc002slz.4">
    <molecule id="Q9BSM1-1"/>
    <property type="organism name" value="human"/>
</dbReference>
<dbReference type="AGR" id="HGNC:17615"/>
<dbReference type="CTD" id="84759"/>
<dbReference type="DisGeNET" id="84759"/>
<dbReference type="GeneCards" id="PCGF1"/>
<dbReference type="HGNC" id="HGNC:17615">
    <property type="gene designation" value="PCGF1"/>
</dbReference>
<dbReference type="HPA" id="ENSG00000115289">
    <property type="expression patterns" value="Low tissue specificity"/>
</dbReference>
<dbReference type="MIM" id="610231">
    <property type="type" value="gene"/>
</dbReference>
<dbReference type="neXtProt" id="NX_Q9BSM1"/>
<dbReference type="OpenTargets" id="ENSG00000115289"/>
<dbReference type="PharmGKB" id="PA134976631"/>
<dbReference type="VEuPathDB" id="HostDB:ENSG00000115289"/>
<dbReference type="eggNOG" id="KOG2660">
    <property type="taxonomic scope" value="Eukaryota"/>
</dbReference>
<dbReference type="GeneTree" id="ENSGT00940000159651"/>
<dbReference type="HOGENOM" id="CLU_046427_4_2_1"/>
<dbReference type="InParanoid" id="Q9BSM1"/>
<dbReference type="OMA" id="AFKMASP"/>
<dbReference type="OrthoDB" id="1305878at2759"/>
<dbReference type="PAN-GO" id="Q9BSM1">
    <property type="GO annotations" value="4 GO annotations based on evolutionary models"/>
</dbReference>
<dbReference type="PhylomeDB" id="Q9BSM1"/>
<dbReference type="TreeFam" id="TF324206"/>
<dbReference type="PathwayCommons" id="Q9BSM1"/>
<dbReference type="SignaLink" id="Q9BSM1"/>
<dbReference type="SIGNOR" id="Q9BSM1"/>
<dbReference type="BioGRID-ORCS" id="84759">
    <property type="hits" value="80 hits in 1222 CRISPR screens"/>
</dbReference>
<dbReference type="ChiTaRS" id="PCGF1">
    <property type="organism name" value="human"/>
</dbReference>
<dbReference type="EvolutionaryTrace" id="Q9BSM1"/>
<dbReference type="GeneWiki" id="PCGF1"/>
<dbReference type="GenomeRNAi" id="84759"/>
<dbReference type="Pharos" id="Q9BSM1">
    <property type="development level" value="Tbio"/>
</dbReference>
<dbReference type="PRO" id="PR:Q9BSM1"/>
<dbReference type="Proteomes" id="UP000005640">
    <property type="component" value="Chromosome 2"/>
</dbReference>
<dbReference type="RNAct" id="Q9BSM1">
    <property type="molecule type" value="protein"/>
</dbReference>
<dbReference type="Bgee" id="ENSG00000115289">
    <property type="expression patterns" value="Expressed in oocyte and 189 other cell types or tissues"/>
</dbReference>
<dbReference type="GO" id="GO:0005654">
    <property type="term" value="C:nucleoplasm"/>
    <property type="evidence" value="ECO:0000314"/>
    <property type="project" value="HPA"/>
</dbReference>
<dbReference type="GO" id="GO:0005634">
    <property type="term" value="C:nucleus"/>
    <property type="evidence" value="ECO:0000314"/>
    <property type="project" value="UniProtKB"/>
</dbReference>
<dbReference type="GO" id="GO:0031519">
    <property type="term" value="C:PcG protein complex"/>
    <property type="evidence" value="ECO:0000314"/>
    <property type="project" value="UniProtKB"/>
</dbReference>
<dbReference type="GO" id="GO:0035102">
    <property type="term" value="C:PRC1 complex"/>
    <property type="evidence" value="ECO:0000318"/>
    <property type="project" value="GO_Central"/>
</dbReference>
<dbReference type="GO" id="GO:1990841">
    <property type="term" value="F:promoter-specific chromatin binding"/>
    <property type="evidence" value="ECO:0000318"/>
    <property type="project" value="GO_Central"/>
</dbReference>
<dbReference type="GO" id="GO:0008270">
    <property type="term" value="F:zinc ion binding"/>
    <property type="evidence" value="ECO:0007669"/>
    <property type="project" value="UniProtKB-KW"/>
</dbReference>
<dbReference type="GO" id="GO:0006338">
    <property type="term" value="P:chromatin remodeling"/>
    <property type="evidence" value="ECO:0000314"/>
    <property type="project" value="UniProtKB"/>
</dbReference>
<dbReference type="GO" id="GO:0000122">
    <property type="term" value="P:negative regulation of transcription by RNA polymerase II"/>
    <property type="evidence" value="ECO:0000318"/>
    <property type="project" value="GO_Central"/>
</dbReference>
<dbReference type="GO" id="GO:0006355">
    <property type="term" value="P:regulation of DNA-templated transcription"/>
    <property type="evidence" value="ECO:0000304"/>
    <property type="project" value="UniProtKB"/>
</dbReference>
<dbReference type="CDD" id="cd17081">
    <property type="entry name" value="RAWUL_PCGF1"/>
    <property type="match status" value="1"/>
</dbReference>
<dbReference type="CDD" id="cd16733">
    <property type="entry name" value="RING-HC_PCGF1"/>
    <property type="match status" value="1"/>
</dbReference>
<dbReference type="FunFam" id="3.10.20.90:FF:000099">
    <property type="entry name" value="Polycomb group RING finger protein 1"/>
    <property type="match status" value="1"/>
</dbReference>
<dbReference type="FunFam" id="3.30.40.10:FF:000122">
    <property type="entry name" value="polycomb group RING finger protein 1"/>
    <property type="match status" value="1"/>
</dbReference>
<dbReference type="Gene3D" id="3.10.20.90">
    <property type="entry name" value="Phosphatidylinositol 3-kinase Catalytic Subunit, Chain A, domain 1"/>
    <property type="match status" value="1"/>
</dbReference>
<dbReference type="Gene3D" id="3.30.40.10">
    <property type="entry name" value="Zinc/RING finger domain, C3HC4 (zinc finger)"/>
    <property type="match status" value="1"/>
</dbReference>
<dbReference type="IDEAL" id="IID00621"/>
<dbReference type="InterPro" id="IPR032443">
    <property type="entry name" value="RAWUL"/>
</dbReference>
<dbReference type="InterPro" id="IPR001841">
    <property type="entry name" value="Znf_RING"/>
</dbReference>
<dbReference type="InterPro" id="IPR013083">
    <property type="entry name" value="Znf_RING/FYVE/PHD"/>
</dbReference>
<dbReference type="InterPro" id="IPR017907">
    <property type="entry name" value="Znf_RING_CS"/>
</dbReference>
<dbReference type="PANTHER" id="PTHR10825:SF29">
    <property type="entry name" value="POLYCOMB GROUP RING FINGER PROTEIN 1"/>
    <property type="match status" value="1"/>
</dbReference>
<dbReference type="PANTHER" id="PTHR10825">
    <property type="entry name" value="RING FINGER DOMAIN-CONTAINING, POLYCOMB GROUP COMPONENT"/>
    <property type="match status" value="1"/>
</dbReference>
<dbReference type="Pfam" id="PF16207">
    <property type="entry name" value="RAWUL"/>
    <property type="match status" value="1"/>
</dbReference>
<dbReference type="Pfam" id="PF13923">
    <property type="entry name" value="zf-C3HC4_2"/>
    <property type="match status" value="1"/>
</dbReference>
<dbReference type="SMART" id="SM00184">
    <property type="entry name" value="RING"/>
    <property type="match status" value="1"/>
</dbReference>
<dbReference type="SUPFAM" id="SSF57850">
    <property type="entry name" value="RING/U-box"/>
    <property type="match status" value="1"/>
</dbReference>
<dbReference type="PROSITE" id="PS00518">
    <property type="entry name" value="ZF_RING_1"/>
    <property type="match status" value="1"/>
</dbReference>
<dbReference type="PROSITE" id="PS50089">
    <property type="entry name" value="ZF_RING_2"/>
    <property type="match status" value="1"/>
</dbReference>
<organism>
    <name type="scientific">Homo sapiens</name>
    <name type="common">Human</name>
    <dbReference type="NCBI Taxonomy" id="9606"/>
    <lineage>
        <taxon>Eukaryota</taxon>
        <taxon>Metazoa</taxon>
        <taxon>Chordata</taxon>
        <taxon>Craniata</taxon>
        <taxon>Vertebrata</taxon>
        <taxon>Euteleostomi</taxon>
        <taxon>Mammalia</taxon>
        <taxon>Eutheria</taxon>
        <taxon>Euarchontoglires</taxon>
        <taxon>Primates</taxon>
        <taxon>Haplorrhini</taxon>
        <taxon>Catarrhini</taxon>
        <taxon>Hominidae</taxon>
        <taxon>Homo</taxon>
    </lineage>
</organism>
<sequence length="259" mass="30346">MASPQGGQIAIAMRLRNQLQSVYKMDPLRNEEEVRVKIKDLNEHIVCCLCAGYFVDATTITECLHTFCKSCIVKYLQTSKYCPMCNIKIHETQPLLNLKLDRVMQDIVYKLVPGLQDSEEKRIREFYQSRGLDRVTQPTGEEPALSNLGLPFSSFDHSKAHYYRYDEQLNLCLERLSSGKDKNKSVLQNKYVRCSVRAEVRHLRRVLCHRLMLNPQHVQLLFDNEVLPDHMTMKQIWLSRWFGKPSPLLLQYSVKEKRR</sequence>
<proteinExistence type="evidence at protein level"/>
<evidence type="ECO:0000255" key="1">
    <source>
        <dbReference type="PROSITE-ProRule" id="PRU00175"/>
    </source>
</evidence>
<evidence type="ECO:0000269" key="2">
    <source>
    </source>
</evidence>
<evidence type="ECO:0000269" key="3">
    <source>
    </source>
</evidence>
<evidence type="ECO:0000269" key="4">
    <source>
    </source>
</evidence>
<evidence type="ECO:0000269" key="5">
    <source>
    </source>
</evidence>
<evidence type="ECO:0000269" key="6">
    <source>
    </source>
</evidence>
<evidence type="ECO:0000269" key="7">
    <source>
    </source>
</evidence>
<evidence type="ECO:0000269" key="8">
    <source>
    </source>
</evidence>
<evidence type="ECO:0000269" key="9">
    <source>
    </source>
</evidence>
<evidence type="ECO:0000269" key="10">
    <source>
    </source>
</evidence>
<evidence type="ECO:0000303" key="11">
    <source ref="1"/>
</evidence>
<evidence type="ECO:0000305" key="12"/>
<evidence type="ECO:0007744" key="13">
    <source>
        <dbReference type="PDB" id="5JH5"/>
    </source>
</evidence>
<evidence type="ECO:0007744" key="14">
    <source>
    </source>
</evidence>
<evidence type="ECO:0007744" key="15">
    <source>
    </source>
</evidence>
<evidence type="ECO:0007829" key="16">
    <source>
        <dbReference type="PDB" id="4HPL"/>
    </source>
</evidence>
<evidence type="ECO:0007829" key="17">
    <source>
        <dbReference type="PDB" id="4HPM"/>
    </source>
</evidence>
<evidence type="ECO:0007829" key="18">
    <source>
        <dbReference type="PDB" id="5JH5"/>
    </source>
</evidence>
<evidence type="ECO:0007829" key="19">
    <source>
        <dbReference type="PDB" id="8HCU"/>
    </source>
</evidence>
<reference key="1">
    <citation type="submission" date="2003-07" db="EMBL/GenBank/DDBJ databases">
        <title>Cloning of a new human cDNA homology to human RNF3A mRNA.</title>
        <authorList>
            <person name="Ding J.B."/>
            <person name="Yu L."/>
            <person name="Chu J.H."/>
            <person name="Ge H.P."/>
            <person name="Wang X.K."/>
            <person name="Zhao S.Y."/>
        </authorList>
    </citation>
    <scope>NUCLEOTIDE SEQUENCE [MRNA] (ISOFORM 2)</scope>
</reference>
<reference key="2">
    <citation type="journal article" date="2005" name="Nature">
        <title>Generation and annotation of the DNA sequences of human chromosomes 2 and 4.</title>
        <authorList>
            <person name="Hillier L.W."/>
            <person name="Graves T.A."/>
            <person name="Fulton R.S."/>
            <person name="Fulton L.A."/>
            <person name="Pepin K.H."/>
            <person name="Minx P."/>
            <person name="Wagner-McPherson C."/>
            <person name="Layman D."/>
            <person name="Wylie K."/>
            <person name="Sekhon M."/>
            <person name="Becker M.C."/>
            <person name="Fewell G.A."/>
            <person name="Delehaunty K.D."/>
            <person name="Miner T.L."/>
            <person name="Nash W.E."/>
            <person name="Kremitzki C."/>
            <person name="Oddy L."/>
            <person name="Du H."/>
            <person name="Sun H."/>
            <person name="Bradshaw-Cordum H."/>
            <person name="Ali J."/>
            <person name="Carter J."/>
            <person name="Cordes M."/>
            <person name="Harris A."/>
            <person name="Isak A."/>
            <person name="van Brunt A."/>
            <person name="Nguyen C."/>
            <person name="Du F."/>
            <person name="Courtney L."/>
            <person name="Kalicki J."/>
            <person name="Ozersky P."/>
            <person name="Abbott S."/>
            <person name="Armstrong J."/>
            <person name="Belter E.A."/>
            <person name="Caruso L."/>
            <person name="Cedroni M."/>
            <person name="Cotton M."/>
            <person name="Davidson T."/>
            <person name="Desai A."/>
            <person name="Elliott G."/>
            <person name="Erb T."/>
            <person name="Fronick C."/>
            <person name="Gaige T."/>
            <person name="Haakenson W."/>
            <person name="Haglund K."/>
            <person name="Holmes A."/>
            <person name="Harkins R."/>
            <person name="Kim K."/>
            <person name="Kruchowski S.S."/>
            <person name="Strong C.M."/>
            <person name="Grewal N."/>
            <person name="Goyea E."/>
            <person name="Hou S."/>
            <person name="Levy A."/>
            <person name="Martinka S."/>
            <person name="Mead K."/>
            <person name="McLellan M.D."/>
            <person name="Meyer R."/>
            <person name="Randall-Maher J."/>
            <person name="Tomlinson C."/>
            <person name="Dauphin-Kohlberg S."/>
            <person name="Kozlowicz-Reilly A."/>
            <person name="Shah N."/>
            <person name="Swearengen-Shahid S."/>
            <person name="Snider J."/>
            <person name="Strong J.T."/>
            <person name="Thompson J."/>
            <person name="Yoakum M."/>
            <person name="Leonard S."/>
            <person name="Pearman C."/>
            <person name="Trani L."/>
            <person name="Radionenko M."/>
            <person name="Waligorski J.E."/>
            <person name="Wang C."/>
            <person name="Rock S.M."/>
            <person name="Tin-Wollam A.-M."/>
            <person name="Maupin R."/>
            <person name="Latreille P."/>
            <person name="Wendl M.C."/>
            <person name="Yang S.-P."/>
            <person name="Pohl C."/>
            <person name="Wallis J.W."/>
            <person name="Spieth J."/>
            <person name="Bieri T.A."/>
            <person name="Berkowicz N."/>
            <person name="Nelson J.O."/>
            <person name="Osborne J."/>
            <person name="Ding L."/>
            <person name="Meyer R."/>
            <person name="Sabo A."/>
            <person name="Shotland Y."/>
            <person name="Sinha P."/>
            <person name="Wohldmann P.E."/>
            <person name="Cook L.L."/>
            <person name="Hickenbotham M.T."/>
            <person name="Eldred J."/>
            <person name="Williams D."/>
            <person name="Jones T.A."/>
            <person name="She X."/>
            <person name="Ciccarelli F.D."/>
            <person name="Izaurralde E."/>
            <person name="Taylor J."/>
            <person name="Schmutz J."/>
            <person name="Myers R.M."/>
            <person name="Cox D.R."/>
            <person name="Huang X."/>
            <person name="McPherson J.D."/>
            <person name="Mardis E.R."/>
            <person name="Clifton S.W."/>
            <person name="Warren W.C."/>
            <person name="Chinwalla A.T."/>
            <person name="Eddy S.R."/>
            <person name="Marra M.A."/>
            <person name="Ovcharenko I."/>
            <person name="Furey T.S."/>
            <person name="Miller W."/>
            <person name="Eichler E.E."/>
            <person name="Bork P."/>
            <person name="Suyama M."/>
            <person name="Torrents D."/>
            <person name="Waterston R.H."/>
            <person name="Wilson R.K."/>
        </authorList>
    </citation>
    <scope>NUCLEOTIDE SEQUENCE [LARGE SCALE GENOMIC DNA]</scope>
</reference>
<reference key="3">
    <citation type="journal article" date="2004" name="Genome Res.">
        <title>The status, quality, and expansion of the NIH full-length cDNA project: the Mammalian Gene Collection (MGC).</title>
        <authorList>
            <consortium name="The MGC Project Team"/>
        </authorList>
    </citation>
    <scope>NUCLEOTIDE SEQUENCE [LARGE SCALE MRNA] OF 4-259 (ISOFORM 1)</scope>
    <source>
        <tissue>Uterus</tissue>
    </source>
</reference>
<reference key="4">
    <citation type="journal article" date="2001" name="Mech. Dev.">
        <title>NSPc1, a novel mammalian Polycomb gene, is expressed in neural crest-derived structures of the peripheral nervous system.</title>
        <authorList>
            <person name="Nunes M."/>
            <person name="Blanc I."/>
            <person name="Maes J."/>
            <person name="Fellous M."/>
            <person name="Robert B."/>
            <person name="McElreavey K."/>
        </authorList>
    </citation>
    <scope>TISSUE SPECIFICITY</scope>
</reference>
<reference key="5">
    <citation type="journal article" date="2005" name="FEBS Lett.">
        <title>NSPc1, a mainly nuclear localized protein of novel PcG family members, has a transcription repression activity related to its PKC phosphorylation site at S183.</title>
        <authorList>
            <person name="Gong Y."/>
            <person name="Wang X."/>
            <person name="Liu J."/>
            <person name="Shi L."/>
            <person name="Yin B."/>
            <person name="Peng X."/>
            <person name="Qiang B."/>
            <person name="Yuan J."/>
        </authorList>
    </citation>
    <scope>FUNCTION</scope>
    <scope>SUBCELLULAR LOCATION</scope>
    <scope>REGION</scope>
    <scope>MUTAGENESIS OF TYR-109 AND SER-195</scope>
</reference>
<reference key="6">
    <citation type="journal article" date="2006" name="Mol. Cell. Biol.">
        <title>Polycomb group and SCF ubiquitin ligases are found in a novel BCOR complex that is recruited to BCL6 targets.</title>
        <authorList>
            <person name="Gearhart M.D."/>
            <person name="Corcoran C.M."/>
            <person name="Wamstad J.A."/>
            <person name="Bardwell V.J."/>
        </authorList>
    </citation>
    <scope>FUNCTION</scope>
    <scope>SUBUNIT</scope>
    <scope>INTERACTION WITH RNF2; BCOR AND RING1</scope>
</reference>
<reference key="7">
    <citation type="journal article" date="2006" name="Nucleic Acids Res.">
        <title>NSPc1 is a cell growth regulator that acts as a transcriptional repressor of p21Waf1/Cip1 via the RARE element.</title>
        <authorList>
            <person name="Gong Y."/>
            <person name="Yue J."/>
            <person name="Wu X."/>
            <person name="Wang X."/>
            <person name="Wen J."/>
            <person name="Lu L."/>
            <person name="Peng X."/>
            <person name="Qiang B."/>
            <person name="Yuan J."/>
        </authorList>
    </citation>
    <scope>FUNCTION</scope>
</reference>
<reference key="8">
    <citation type="journal article" date="2010" name="Sci. Signal.">
        <title>Quantitative phosphoproteomics reveals widespread full phosphorylation site occupancy during mitosis.</title>
        <authorList>
            <person name="Olsen J.V."/>
            <person name="Vermeulen M."/>
            <person name="Santamaria A."/>
            <person name="Kumar C."/>
            <person name="Miller M.L."/>
            <person name="Jensen L.J."/>
            <person name="Gnad F."/>
            <person name="Cox J."/>
            <person name="Jensen T.S."/>
            <person name="Nigg E.A."/>
            <person name="Brunak S."/>
            <person name="Mann M."/>
        </authorList>
    </citation>
    <scope>ACETYLATION [LARGE SCALE ANALYSIS] AT ALA-2</scope>
    <scope>PHOSPHORYLATION [LARGE SCALE ANALYSIS] AT SER-3</scope>
    <scope>CLEAVAGE OF INITIATOR METHIONINE [LARGE SCALE ANALYSIS]</scope>
    <scope>IDENTIFICATION BY MASS SPECTROMETRY [LARGE SCALE ANALYSIS]</scope>
    <source>
        <tissue>Cervix carcinoma</tissue>
    </source>
</reference>
<reference key="9">
    <citation type="journal article" date="2011" name="Mol. Cell. Proteomics">
        <title>Interaction proteomics analysis of polycomb proteins defines distinct PRC1 Complexes in mammalian cells.</title>
        <authorList>
            <person name="Vandamme J."/>
            <person name="Volkel P."/>
            <person name="Rosnoblet C."/>
            <person name="Le Faou P."/>
            <person name="Angrand P.O."/>
        </authorList>
    </citation>
    <scope>IDENTIFICATION IN A PRC1-LIKE COMPLEX</scope>
    <scope>INTERACTION WITH CBX6; CBX7 AND CBX8</scope>
    <scope>SUBCELLULAR LOCATION</scope>
</reference>
<reference key="10">
    <citation type="journal article" date="2015" name="Nat. Commun.">
        <title>BMI1-RING1B is an autoinhibited RING E3 ubiquitin ligase.</title>
        <authorList>
            <person name="Taherbhoy A.M."/>
            <person name="Huang O.W."/>
            <person name="Cochran A.G."/>
        </authorList>
    </citation>
    <scope>FUNCTION</scope>
    <scope>SUBUNIT</scope>
</reference>
<reference key="11">
    <citation type="journal article" date="2015" name="Sci. Rep.">
        <title>The variant Polycomb Repressor Complex 1 component PCGF1 interacts with a pluripotency sub-network that includes DPPA4, a regulator of embryogenesis.</title>
        <authorList>
            <person name="Oliviero G."/>
            <person name="Munawar N."/>
            <person name="Watson A."/>
            <person name="Streubel G."/>
            <person name="Manning G."/>
            <person name="Bardwell V."/>
            <person name="Bracken A.P."/>
            <person name="Cagney G."/>
        </authorList>
    </citation>
    <scope>IDENTIFICATION BY MASS SPECTROMETRY</scope>
    <scope>FUNCTION</scope>
    <scope>INTERACTION WITH DPPA4; BCOR; NANOG; POU5F1; RNF2 AND RYBP</scope>
</reference>
<reference key="12">
    <citation type="journal article" date="2017" name="Nat. Struct. Mol. Biol.">
        <title>Site-specific mapping of the human SUMO proteome reveals co-modification with phosphorylation.</title>
        <authorList>
            <person name="Hendriks I.A."/>
            <person name="Lyon D."/>
            <person name="Young C."/>
            <person name="Jensen L.J."/>
            <person name="Vertegaal A.C."/>
            <person name="Nielsen M.L."/>
        </authorList>
    </citation>
    <scope>SUMOYLATION [LARGE SCALE ANALYSIS] AT LYS-24 AND LYS-88</scope>
    <scope>IDENTIFICATION BY MASS SPECTROMETRY [LARGE SCALE ANALYSIS]</scope>
</reference>
<reference key="13">
    <citation type="journal article" date="2013" name="Structure">
        <title>Structure of the polycomb group protein PCGF1 in complex with BCOR reveals basis for binding selectivity of PCGF homologs.</title>
        <authorList>
            <person name="Junco S.E."/>
            <person name="Wang R."/>
            <person name="Gaipa J.C."/>
            <person name="Taylor A.B."/>
            <person name="Schirf V."/>
            <person name="Gearhart M.D."/>
            <person name="Bardwell V.J."/>
            <person name="Demeler B."/>
            <person name="Hart P.J."/>
            <person name="Kim C.A."/>
        </authorList>
    </citation>
    <scope>X-RAY CRYSTALLOGRAPHY (1.85 ANGSTROMS) OF 167-255 IN COMPLEXES WITH BCOR AND BCORL1</scope>
    <scope>INTERACTION WITH BCOR AND BCORL1</scope>
    <scope>MUTAGENESIS OF TYR-191; ARG-193 AND VAL-206</scope>
</reference>
<reference evidence="13" key="14">
    <citation type="journal article" date="2016" name="Structure">
        <title>KDM2B Recruitment of the Polycomb Group Complex, PRC1.1, Requires Cooperation between PCGF1 and BCORL1.</title>
        <authorList>
            <person name="Wong S.J."/>
            <person name="Gearhart M.D."/>
            <person name="Taylor A.B."/>
            <person name="Nanyes D.R."/>
            <person name="Ha D.J."/>
            <person name="Robinson A.K."/>
            <person name="Artigas J.A."/>
            <person name="Lee O.J."/>
            <person name="Demeler B."/>
            <person name="Hart P.J."/>
            <person name="Bardwell V.J."/>
            <person name="Kim C.A."/>
        </authorList>
    </citation>
    <scope>X-RAY CRYSTALLOGRAPHY (2.55 ANGSTROMS) OF 150-255</scope>
    <scope>SUBUNIT</scope>
</reference>
<keyword id="KW-0002">3D-structure</keyword>
<keyword id="KW-0007">Acetylation</keyword>
<keyword id="KW-0025">Alternative splicing</keyword>
<keyword id="KW-1017">Isopeptide bond</keyword>
<keyword id="KW-0479">Metal-binding</keyword>
<keyword id="KW-0539">Nucleus</keyword>
<keyword id="KW-0597">Phosphoprotein</keyword>
<keyword id="KW-1267">Proteomics identification</keyword>
<keyword id="KW-1185">Reference proteome</keyword>
<keyword id="KW-0678">Repressor</keyword>
<keyword id="KW-0804">Transcription</keyword>
<keyword id="KW-0805">Transcription regulation</keyword>
<keyword id="KW-0832">Ubl conjugation</keyword>
<keyword id="KW-0862">Zinc</keyword>
<keyword id="KW-0863">Zinc-finger</keyword>
<accession>Q9BSM1</accession>
<accession>Q7Z506</accession>
<name>PCGF1_HUMAN</name>
<protein>
    <recommendedName>
        <fullName>Polycomb group RING finger protein 1</fullName>
    </recommendedName>
    <alternativeName>
        <fullName>Nervous system Polycomb-1</fullName>
        <shortName>NSPc1</shortName>
    </alternativeName>
    <alternativeName>
        <fullName>RING finger protein 68</fullName>
    </alternativeName>
</protein>
<feature type="initiator methionine" description="Removed" evidence="14">
    <location>
        <position position="1"/>
    </location>
</feature>
<feature type="chain" id="PRO_0000277855" description="Polycomb group RING finger protein 1">
    <location>
        <begin position="2"/>
        <end position="259"/>
    </location>
</feature>
<feature type="zinc finger region" description="RING-type" evidence="1">
    <location>
        <begin position="47"/>
        <end position="86"/>
    </location>
</feature>
<feature type="region of interest" description="Required for repressor activity">
    <location>
        <begin position="86"/>
        <end position="247"/>
    </location>
</feature>
<feature type="region of interest" description="Required for the interaction with the KDM2B-SKP1 heterodimeric complex" evidence="10">
    <location>
        <begin position="150"/>
        <end position="255"/>
    </location>
</feature>
<feature type="region of interest" description="RING-finger and WD40-associated ubiquitin-like domain (RAWUL); sufficient for interaction with BCOR and BCORL1" evidence="7 10">
    <location>
        <begin position="167"/>
        <end position="255"/>
    </location>
</feature>
<feature type="modified residue" description="N-acetylalanine" evidence="14">
    <location>
        <position position="2"/>
    </location>
</feature>
<feature type="modified residue" description="Phosphoserine" evidence="14">
    <location>
        <position position="3"/>
    </location>
</feature>
<feature type="cross-link" description="Glycyl lysine isopeptide (Lys-Gly) (interchain with G-Cter in SUMO2)" evidence="15">
    <location>
        <position position="24"/>
    </location>
</feature>
<feature type="cross-link" description="Glycyl lysine isopeptide (Lys-Gly) (interchain with G-Cter in SUMO2)" evidence="15">
    <location>
        <position position="88"/>
    </location>
</feature>
<feature type="splice variant" id="VSP_036393" description="In isoform 2." evidence="11">
    <location>
        <begin position="1"/>
        <end position="83"/>
    </location>
</feature>
<feature type="mutagenesis site" description="Marked decrease of repressor activity. May be a kinase phosphorylation site." evidence="3">
    <original>Y</original>
    <variation>F</variation>
    <location>
        <position position="109"/>
    </location>
</feature>
<feature type="mutagenesis site" description="Abolishes interaction with BCOR and BCORL1." evidence="7">
    <original>Y</original>
    <variation>A</variation>
    <location>
        <position position="191"/>
    </location>
</feature>
<feature type="mutagenesis site" description="Abolishes interaction with BCOR and BCORL1." evidence="7">
    <original>R</original>
    <variation>A</variation>
    <location>
        <position position="193"/>
    </location>
</feature>
<feature type="mutagenesis site" description="Abolishes repressor activity. May be a PKC phosphorylation site." evidence="3">
    <original>S</original>
    <variation>F</variation>
    <location>
        <position position="195"/>
    </location>
</feature>
<feature type="mutagenesis site" description="Abolishes interaction with BCOR and BCORL1." evidence="7">
    <original>V</original>
    <variation>D</variation>
    <location>
        <position position="206"/>
    </location>
</feature>
<feature type="turn" evidence="18">
    <location>
        <begin position="158"/>
        <end position="161"/>
    </location>
</feature>
<feature type="helix" evidence="19">
    <location>
        <begin position="163"/>
        <end position="165"/>
    </location>
</feature>
<feature type="strand" evidence="17">
    <location>
        <begin position="168"/>
        <end position="176"/>
    </location>
</feature>
<feature type="strand" evidence="17">
    <location>
        <begin position="191"/>
        <end position="195"/>
    </location>
</feature>
<feature type="helix" evidence="17">
    <location>
        <begin position="200"/>
        <end position="211"/>
    </location>
</feature>
<feature type="helix" evidence="17">
    <location>
        <begin position="215"/>
        <end position="217"/>
    </location>
</feature>
<feature type="strand" evidence="17">
    <location>
        <begin position="219"/>
        <end position="222"/>
    </location>
</feature>
<feature type="helix" evidence="17">
    <location>
        <begin position="233"/>
        <end position="240"/>
    </location>
</feature>
<feature type="turn" evidence="16">
    <location>
        <begin position="241"/>
        <end position="243"/>
    </location>
</feature>
<feature type="strand" evidence="17">
    <location>
        <begin position="246"/>
        <end position="253"/>
    </location>
</feature>